<proteinExistence type="inferred from homology"/>
<evidence type="ECO:0000255" key="1">
    <source>
        <dbReference type="HAMAP-Rule" id="MF_00141"/>
    </source>
</evidence>
<organism>
    <name type="scientific">Shewanella baltica (strain OS223)</name>
    <dbReference type="NCBI Taxonomy" id="407976"/>
    <lineage>
        <taxon>Bacteria</taxon>
        <taxon>Pseudomonadati</taxon>
        <taxon>Pseudomonadota</taxon>
        <taxon>Gammaproteobacteria</taxon>
        <taxon>Alteromonadales</taxon>
        <taxon>Shewanellaceae</taxon>
        <taxon>Shewanella</taxon>
    </lineage>
</organism>
<name>EFP_SHEB2</name>
<protein>
    <recommendedName>
        <fullName evidence="1">Elongation factor P</fullName>
        <shortName evidence="1">EF-P</shortName>
    </recommendedName>
</protein>
<accession>B8E520</accession>
<dbReference type="EMBL" id="CP001252">
    <property type="protein sequence ID" value="ACK46744.1"/>
    <property type="molecule type" value="Genomic_DNA"/>
</dbReference>
<dbReference type="RefSeq" id="WP_006081573.1">
    <property type="nucleotide sequence ID" value="NC_011663.1"/>
</dbReference>
<dbReference type="SMR" id="B8E520"/>
<dbReference type="GeneID" id="11772332"/>
<dbReference type="KEGG" id="sbp:Sbal223_2245"/>
<dbReference type="HOGENOM" id="CLU_074944_2_1_6"/>
<dbReference type="UniPathway" id="UPA00345"/>
<dbReference type="Proteomes" id="UP000002507">
    <property type="component" value="Chromosome"/>
</dbReference>
<dbReference type="GO" id="GO:0005737">
    <property type="term" value="C:cytoplasm"/>
    <property type="evidence" value="ECO:0007669"/>
    <property type="project" value="UniProtKB-SubCell"/>
</dbReference>
<dbReference type="GO" id="GO:0003746">
    <property type="term" value="F:translation elongation factor activity"/>
    <property type="evidence" value="ECO:0007669"/>
    <property type="project" value="UniProtKB-UniRule"/>
</dbReference>
<dbReference type="GO" id="GO:0043043">
    <property type="term" value="P:peptide biosynthetic process"/>
    <property type="evidence" value="ECO:0007669"/>
    <property type="project" value="InterPro"/>
</dbReference>
<dbReference type="CDD" id="cd04470">
    <property type="entry name" value="S1_EF-P_repeat_1"/>
    <property type="match status" value="1"/>
</dbReference>
<dbReference type="CDD" id="cd05794">
    <property type="entry name" value="S1_EF-P_repeat_2"/>
    <property type="match status" value="1"/>
</dbReference>
<dbReference type="FunFam" id="2.30.30.30:FF:000003">
    <property type="entry name" value="Elongation factor P"/>
    <property type="match status" value="1"/>
</dbReference>
<dbReference type="FunFam" id="2.40.50.140:FF:000004">
    <property type="entry name" value="Elongation factor P"/>
    <property type="match status" value="1"/>
</dbReference>
<dbReference type="FunFam" id="2.40.50.140:FF:000009">
    <property type="entry name" value="Elongation factor P"/>
    <property type="match status" value="1"/>
</dbReference>
<dbReference type="Gene3D" id="2.30.30.30">
    <property type="match status" value="1"/>
</dbReference>
<dbReference type="Gene3D" id="2.40.50.140">
    <property type="entry name" value="Nucleic acid-binding proteins"/>
    <property type="match status" value="2"/>
</dbReference>
<dbReference type="HAMAP" id="MF_00141">
    <property type="entry name" value="EF_P"/>
    <property type="match status" value="1"/>
</dbReference>
<dbReference type="InterPro" id="IPR015365">
    <property type="entry name" value="Elong-fact-P_C"/>
</dbReference>
<dbReference type="InterPro" id="IPR012340">
    <property type="entry name" value="NA-bd_OB-fold"/>
</dbReference>
<dbReference type="InterPro" id="IPR014722">
    <property type="entry name" value="Rib_uL2_dom2"/>
</dbReference>
<dbReference type="InterPro" id="IPR020599">
    <property type="entry name" value="Transl_elong_fac_P/YeiP"/>
</dbReference>
<dbReference type="InterPro" id="IPR013185">
    <property type="entry name" value="Transl_elong_KOW-like"/>
</dbReference>
<dbReference type="InterPro" id="IPR001059">
    <property type="entry name" value="Transl_elong_P/YeiP_cen"/>
</dbReference>
<dbReference type="InterPro" id="IPR011768">
    <property type="entry name" value="Transl_elongation_fac_P"/>
</dbReference>
<dbReference type="InterPro" id="IPR008991">
    <property type="entry name" value="Translation_prot_SH3-like_sf"/>
</dbReference>
<dbReference type="NCBIfam" id="TIGR00038">
    <property type="entry name" value="efp"/>
    <property type="match status" value="1"/>
</dbReference>
<dbReference type="NCBIfam" id="NF001810">
    <property type="entry name" value="PRK00529.1"/>
    <property type="match status" value="1"/>
</dbReference>
<dbReference type="PANTHER" id="PTHR30053">
    <property type="entry name" value="ELONGATION FACTOR P"/>
    <property type="match status" value="1"/>
</dbReference>
<dbReference type="PANTHER" id="PTHR30053:SF12">
    <property type="entry name" value="ELONGATION FACTOR P (EF-P) FAMILY PROTEIN"/>
    <property type="match status" value="1"/>
</dbReference>
<dbReference type="Pfam" id="PF01132">
    <property type="entry name" value="EFP"/>
    <property type="match status" value="1"/>
</dbReference>
<dbReference type="Pfam" id="PF08207">
    <property type="entry name" value="EFP_N"/>
    <property type="match status" value="1"/>
</dbReference>
<dbReference type="Pfam" id="PF09285">
    <property type="entry name" value="Elong-fact-P_C"/>
    <property type="match status" value="1"/>
</dbReference>
<dbReference type="PIRSF" id="PIRSF005901">
    <property type="entry name" value="EF-P"/>
    <property type="match status" value="1"/>
</dbReference>
<dbReference type="SMART" id="SM01185">
    <property type="entry name" value="EFP"/>
    <property type="match status" value="1"/>
</dbReference>
<dbReference type="SMART" id="SM00841">
    <property type="entry name" value="Elong-fact-P_C"/>
    <property type="match status" value="1"/>
</dbReference>
<dbReference type="SUPFAM" id="SSF50249">
    <property type="entry name" value="Nucleic acid-binding proteins"/>
    <property type="match status" value="2"/>
</dbReference>
<dbReference type="SUPFAM" id="SSF50104">
    <property type="entry name" value="Translation proteins SH3-like domain"/>
    <property type="match status" value="1"/>
</dbReference>
<feature type="chain" id="PRO_1000123026" description="Elongation factor P">
    <location>
        <begin position="1"/>
        <end position="186"/>
    </location>
</feature>
<comment type="function">
    <text evidence="1">Involved in peptide bond synthesis. Stimulates efficient translation and peptide-bond synthesis on native or reconstituted 70S ribosomes in vitro. Probably functions indirectly by altering the affinity of the ribosome for aminoacyl-tRNA, thus increasing their reactivity as acceptors for peptidyl transferase.</text>
</comment>
<comment type="pathway">
    <text evidence="1">Protein biosynthesis; polypeptide chain elongation.</text>
</comment>
<comment type="subcellular location">
    <subcellularLocation>
        <location evidence="1">Cytoplasm</location>
    </subcellularLocation>
</comment>
<comment type="similarity">
    <text evidence="1">Belongs to the elongation factor P family.</text>
</comment>
<gene>
    <name evidence="1" type="primary">efp</name>
    <name type="ordered locus">Sbal223_2245</name>
</gene>
<keyword id="KW-0963">Cytoplasm</keyword>
<keyword id="KW-0251">Elongation factor</keyword>
<keyword id="KW-0648">Protein biosynthesis</keyword>
<sequence length="186" mass="20583">MKTAHEIRPGNVIMLDGSPWVVQKTETTRSGRNAAIVKLKLKNLLLNSGTETTFKGEDKLEDIILDRLDCTYSYFADPMFVFMDAEYNQYDVEAENLGDAAAYIVDGMEETCQVTFYDGKAISVEMPTTIVREVIYTEPSARGDTSGKVMKPATITGGGTVTVADFVKVGDKIEIDTRTGEFKKRV</sequence>
<reference key="1">
    <citation type="submission" date="2008-12" db="EMBL/GenBank/DDBJ databases">
        <title>Complete sequence of chromosome of Shewanella baltica OS223.</title>
        <authorList>
            <consortium name="US DOE Joint Genome Institute"/>
            <person name="Lucas S."/>
            <person name="Copeland A."/>
            <person name="Lapidus A."/>
            <person name="Glavina del Rio T."/>
            <person name="Dalin E."/>
            <person name="Tice H."/>
            <person name="Bruce D."/>
            <person name="Goodwin L."/>
            <person name="Pitluck S."/>
            <person name="Chertkov O."/>
            <person name="Meincke L."/>
            <person name="Brettin T."/>
            <person name="Detter J.C."/>
            <person name="Han C."/>
            <person name="Kuske C.R."/>
            <person name="Larimer F."/>
            <person name="Land M."/>
            <person name="Hauser L."/>
            <person name="Kyrpides N."/>
            <person name="Ovchinnikova G."/>
            <person name="Brettar I."/>
            <person name="Rodrigues J."/>
            <person name="Konstantinidis K."/>
            <person name="Tiedje J."/>
        </authorList>
    </citation>
    <scope>NUCLEOTIDE SEQUENCE [LARGE SCALE GENOMIC DNA]</scope>
    <source>
        <strain>OS223</strain>
    </source>
</reference>